<accession>P10815</accession>
<accession>Q9UU16</accession>
<organism>
    <name type="scientific">Schizosaccharomyces pombe (strain 972 / ATCC 24843)</name>
    <name type="common">Fission yeast</name>
    <dbReference type="NCBI Taxonomy" id="284812"/>
    <lineage>
        <taxon>Eukaryota</taxon>
        <taxon>Fungi</taxon>
        <taxon>Dikarya</taxon>
        <taxon>Ascomycota</taxon>
        <taxon>Taphrinomycotina</taxon>
        <taxon>Schizosaccharomycetes</taxon>
        <taxon>Schizosaccharomycetales</taxon>
        <taxon>Schizosaccharomycetaceae</taxon>
        <taxon>Schizosaccharomyces</taxon>
    </lineage>
</organism>
<keyword id="KW-0131">Cell cycle</keyword>
<keyword id="KW-0132">Cell division</keyword>
<keyword id="KW-0195">Cyclin</keyword>
<keyword id="KW-0963">Cytoplasm</keyword>
<keyword id="KW-0206">Cytoskeleton</keyword>
<keyword id="KW-0498">Mitosis</keyword>
<keyword id="KW-0539">Nucleus</keyword>
<keyword id="KW-1185">Reference proteome</keyword>
<comment type="function">
    <text evidence="4 5 6 7 8 9">Essential for the control of the cell cycle at the G2/M (mitosis) transition (PubMed:2847913, PubMed:2908246). Interacts with the cdc2 protein kinase to form MPF (PubMed:8455610). G2/M cyclins accumulate steadily during G2 and are abruptly destroyed at mitosis (PubMed:2534559). Involved in the reorganization of the cytoskeleton on transition from G2 to mitosis (PubMed:2908246). Association with rum1 promotes its proteolysis during G1 (PubMed:9303310). Also essential for initiation of meiosis II (PubMed:7498766).</text>
</comment>
<comment type="subunit">
    <text evidence="2 5 8 9 10 11">Interacts with cdc2 (PubMed:8455610). Interacts with rum1 (PubMed:9303310, PubMed:9472012, PubMed:9614176). Associates with microtubules (PubMed:2847913). Also interacts with cdc11 (PubMed:15062098).</text>
</comment>
<comment type="interaction">
    <interactant intactId="EBI-1187843">
        <id>P10815</id>
    </interactant>
    <interactant intactId="EBI-1187892">
        <id>P40380</id>
        <label>rum1</label>
    </interactant>
    <organismsDiffer>false</organismsDiffer>
    <experiments>5</experiments>
</comment>
<comment type="subcellular location">
    <subcellularLocation>
        <location evidence="3 4">Nucleus</location>
    </subcellularLocation>
    <subcellularLocation>
        <location evidence="3">Cytoplasm</location>
        <location evidence="3">Cytoskeleton</location>
        <location evidence="3">Microtubule organizing center</location>
        <location evidence="3">Spindle pole body</location>
    </subcellularLocation>
</comment>
<comment type="similarity">
    <text evidence="13">Belongs to the cyclin family. Cyclin AB subfamily.</text>
</comment>
<name>CG23_SCHPO</name>
<evidence type="ECO:0000256" key="1">
    <source>
        <dbReference type="SAM" id="MobiDB-lite"/>
    </source>
</evidence>
<evidence type="ECO:0000269" key="2">
    <source>
    </source>
</evidence>
<evidence type="ECO:0000269" key="3">
    <source>
    </source>
</evidence>
<evidence type="ECO:0000269" key="4">
    <source>
    </source>
</evidence>
<evidence type="ECO:0000269" key="5">
    <source>
    </source>
</evidence>
<evidence type="ECO:0000269" key="6">
    <source>
    </source>
</evidence>
<evidence type="ECO:0000269" key="7">
    <source>
    </source>
</evidence>
<evidence type="ECO:0000269" key="8">
    <source>
    </source>
</evidence>
<evidence type="ECO:0000269" key="9">
    <source>
    </source>
</evidence>
<evidence type="ECO:0000269" key="10">
    <source>
    </source>
</evidence>
<evidence type="ECO:0000269" key="11">
    <source>
    </source>
</evidence>
<evidence type="ECO:0000303" key="12">
    <source>
    </source>
</evidence>
<evidence type="ECO:0000305" key="13"/>
<evidence type="ECO:0000312" key="14">
    <source>
        <dbReference type="PomBase" id="SPBC582.03"/>
    </source>
</evidence>
<gene>
    <name evidence="12" type="primary">cdc13</name>
    <name evidence="14" type="ORF">SPBC582.03</name>
</gene>
<sequence length="482" mass="55609">MTTRRLTRQHLLANTLGNNDENHPSNHIARAKSSLHSSENSLVNGKKATVSSTNVPKKRHALDDVSNFHNKEGVPLASKNTNVRHTTASVSTRRALEEKSIIPATDDEPASKKRRQPSVFNSSVPSLPQHLSTKSHSVSTHGVDAFHKDQATIPKKLKKDVDERVVSKDIPKLHRDSVESPESQDWDDLDAEDWADPLMVSEYVVDIFEYLNELEIETMPSPTYMDRQKELAWKMRGILTDWLIEVHSRFRLLPETLFLAVNIIDRFLSLRVCSLNKLQLVGIAALFIASKYEEVMCPSVQNFVYMADGGYDEEEILQAERYILRVLEFNLAYPNPMNFLRRISKADFYDIQTRTVAKYLVEIGLLDHKLLPYPPSQQCAAAMYLAREMLGRGPWNRNLVHYSGYEEYQLISVVKKMINYLQKPVQHEAFFKKYASKKFMKASLFVRDWIKKNSIPLGDDADEDYTFHKQKRIQHDMKDEEW</sequence>
<feature type="chain" id="PRO_0000080402" description="G2/mitotic-specific cyclin cdc13">
    <location>
        <begin position="1"/>
        <end position="482"/>
    </location>
</feature>
<feature type="domain" description="Cyclin N-terminal">
    <location>
        <begin position="206"/>
        <end position="332"/>
    </location>
</feature>
<feature type="region of interest" description="Disordered" evidence="1">
    <location>
        <begin position="35"/>
        <end position="140"/>
    </location>
</feature>
<feature type="compositionally biased region" description="Polar residues" evidence="1">
    <location>
        <begin position="35"/>
        <end position="55"/>
    </location>
</feature>
<feature type="compositionally biased region" description="Polar residues" evidence="1">
    <location>
        <begin position="78"/>
        <end position="92"/>
    </location>
</feature>
<feature type="compositionally biased region" description="Polar residues" evidence="1">
    <location>
        <begin position="118"/>
        <end position="140"/>
    </location>
</feature>
<feature type="sequence conflict" description="In Ref. 2; no nucleotide entry." evidence="13" ref="2">
    <original>D</original>
    <variation>H</variation>
    <location>
        <position position="479"/>
    </location>
</feature>
<dbReference type="EMBL" id="X12557">
    <property type="protein sequence ID" value="CAA31070.1"/>
    <property type="molecule type" value="Genomic_DNA"/>
</dbReference>
<dbReference type="EMBL" id="CU329671">
    <property type="protein sequence ID" value="CAB46666.1"/>
    <property type="molecule type" value="Genomic_DNA"/>
</dbReference>
<dbReference type="EMBL" id="AB027869">
    <property type="protein sequence ID" value="BAA87173.1"/>
    <property type="molecule type" value="Genomic_DNA"/>
</dbReference>
<dbReference type="PIR" id="A34948">
    <property type="entry name" value="A34948"/>
</dbReference>
<dbReference type="PIR" id="S01153">
    <property type="entry name" value="S01153"/>
</dbReference>
<dbReference type="RefSeq" id="NP_595171.1">
    <property type="nucleotide sequence ID" value="NM_001021079.2"/>
</dbReference>
<dbReference type="SMR" id="P10815"/>
<dbReference type="BioGRID" id="277397">
    <property type="interactions" value="59"/>
</dbReference>
<dbReference type="DIP" id="DIP-620N"/>
<dbReference type="FunCoup" id="P10815">
    <property type="interactions" value="871"/>
</dbReference>
<dbReference type="IntAct" id="P10815">
    <property type="interactions" value="15"/>
</dbReference>
<dbReference type="STRING" id="284812.P10815"/>
<dbReference type="iPTMnet" id="P10815"/>
<dbReference type="PaxDb" id="4896-SPBC582.03.1"/>
<dbReference type="EnsemblFungi" id="SPBC582.03.1">
    <property type="protein sequence ID" value="SPBC582.03.1:pep"/>
    <property type="gene ID" value="SPBC582.03"/>
</dbReference>
<dbReference type="PomBase" id="SPBC582.03">
    <property type="gene designation" value="cdc13"/>
</dbReference>
<dbReference type="VEuPathDB" id="FungiDB:SPBC582.03"/>
<dbReference type="eggNOG" id="KOG0653">
    <property type="taxonomic scope" value="Eukaryota"/>
</dbReference>
<dbReference type="HOGENOM" id="CLU_020695_10_6_1"/>
<dbReference type="InParanoid" id="P10815"/>
<dbReference type="OMA" id="AEDWADP"/>
<dbReference type="PhylomeDB" id="P10815"/>
<dbReference type="PRO" id="PR:P10815"/>
<dbReference type="Proteomes" id="UP000002485">
    <property type="component" value="Chromosome II"/>
</dbReference>
<dbReference type="GO" id="GO:0000785">
    <property type="term" value="C:chromatin"/>
    <property type="evidence" value="ECO:0000314"/>
    <property type="project" value="PomBase"/>
</dbReference>
<dbReference type="GO" id="GO:0140445">
    <property type="term" value="C:chromosome, telomeric repeat region"/>
    <property type="evidence" value="ECO:0000269"/>
    <property type="project" value="PomBase"/>
</dbReference>
<dbReference type="GO" id="GO:0000307">
    <property type="term" value="C:cyclin-dependent protein kinase holoenzyme complex"/>
    <property type="evidence" value="ECO:0000318"/>
    <property type="project" value="GO_Central"/>
</dbReference>
<dbReference type="GO" id="GO:0005737">
    <property type="term" value="C:cytoplasm"/>
    <property type="evidence" value="ECO:0000314"/>
    <property type="project" value="PomBase"/>
</dbReference>
<dbReference type="GO" id="GO:0072687">
    <property type="term" value="C:meiotic spindle"/>
    <property type="evidence" value="ECO:0000314"/>
    <property type="project" value="PomBase"/>
</dbReference>
<dbReference type="GO" id="GO:0005815">
    <property type="term" value="C:microtubule organizing center"/>
    <property type="evidence" value="ECO:0000318"/>
    <property type="project" value="GO_Central"/>
</dbReference>
<dbReference type="GO" id="GO:0072686">
    <property type="term" value="C:mitotic spindle"/>
    <property type="evidence" value="ECO:0000269"/>
    <property type="project" value="PomBase"/>
</dbReference>
<dbReference type="GO" id="GO:1990023">
    <property type="term" value="C:mitotic spindle midzone"/>
    <property type="evidence" value="ECO:0000314"/>
    <property type="project" value="PomBase"/>
</dbReference>
<dbReference type="GO" id="GO:0044732">
    <property type="term" value="C:mitotic spindle pole body"/>
    <property type="evidence" value="ECO:0000314"/>
    <property type="project" value="PomBase"/>
</dbReference>
<dbReference type="GO" id="GO:0071958">
    <property type="term" value="C:new mitotic spindle pole body"/>
    <property type="evidence" value="ECO:0000314"/>
    <property type="project" value="PomBase"/>
</dbReference>
<dbReference type="GO" id="GO:0034399">
    <property type="term" value="C:nuclear periphery"/>
    <property type="evidence" value="ECO:0000314"/>
    <property type="project" value="PomBase"/>
</dbReference>
<dbReference type="GO" id="GO:0140602">
    <property type="term" value="C:nucleolar peripheral inclusion body"/>
    <property type="evidence" value="ECO:0000314"/>
    <property type="project" value="PomBase"/>
</dbReference>
<dbReference type="GO" id="GO:0005730">
    <property type="term" value="C:nucleolus"/>
    <property type="evidence" value="ECO:0000314"/>
    <property type="project" value="PomBase"/>
</dbReference>
<dbReference type="GO" id="GO:0005654">
    <property type="term" value="C:nucleoplasm"/>
    <property type="evidence" value="ECO:0000314"/>
    <property type="project" value="PomBase"/>
</dbReference>
<dbReference type="GO" id="GO:0005634">
    <property type="term" value="C:nucleus"/>
    <property type="evidence" value="ECO:0000314"/>
    <property type="project" value="PomBase"/>
</dbReference>
<dbReference type="GO" id="GO:0071957">
    <property type="term" value="C:old mitotic spindle pole body"/>
    <property type="evidence" value="ECO:0000314"/>
    <property type="project" value="PomBase"/>
</dbReference>
<dbReference type="GO" id="GO:0061575">
    <property type="term" value="F:cyclin-dependent protein serine/threonine kinase activator activity"/>
    <property type="evidence" value="ECO:0000315"/>
    <property type="project" value="PomBase"/>
</dbReference>
<dbReference type="GO" id="GO:0016538">
    <property type="term" value="F:cyclin-dependent protein serine/threonine kinase regulator activity"/>
    <property type="evidence" value="ECO:0000318"/>
    <property type="project" value="GO_Central"/>
</dbReference>
<dbReference type="GO" id="GO:0051301">
    <property type="term" value="P:cell division"/>
    <property type="evidence" value="ECO:0007669"/>
    <property type="project" value="UniProtKB-KW"/>
</dbReference>
<dbReference type="GO" id="GO:0000082">
    <property type="term" value="P:G1/S transition of mitotic cell cycle"/>
    <property type="evidence" value="ECO:0000318"/>
    <property type="project" value="GO_Central"/>
</dbReference>
<dbReference type="GO" id="GO:0140013">
    <property type="term" value="P:meiotic nuclear division"/>
    <property type="evidence" value="ECO:0000315"/>
    <property type="project" value="PomBase"/>
</dbReference>
<dbReference type="GO" id="GO:0044773">
    <property type="term" value="P:mitotic DNA damage checkpoint signaling"/>
    <property type="evidence" value="ECO:0000269"/>
    <property type="project" value="PomBase"/>
</dbReference>
<dbReference type="GO" id="GO:0075297">
    <property type="term" value="P:negative regulation of ascospore formation"/>
    <property type="evidence" value="ECO:0000315"/>
    <property type="project" value="PomBase"/>
</dbReference>
<dbReference type="GO" id="GO:0051447">
    <property type="term" value="P:negative regulation of meiotic cell cycle"/>
    <property type="evidence" value="ECO:0000315"/>
    <property type="project" value="PomBase"/>
</dbReference>
<dbReference type="GO" id="GO:0010971">
    <property type="term" value="P:positive regulation of G2/M transition of mitotic cell cycle"/>
    <property type="evidence" value="ECO:0000315"/>
    <property type="project" value="PomBase"/>
</dbReference>
<dbReference type="GO" id="GO:0140429">
    <property type="term" value="P:positive regulation of mitotic sister chromatid biorientation"/>
    <property type="evidence" value="ECO:0000316"/>
    <property type="project" value="PomBase"/>
</dbReference>
<dbReference type="GO" id="GO:0010389">
    <property type="term" value="P:regulation of G2/M transition of mitotic cell cycle"/>
    <property type="evidence" value="ECO:0000315"/>
    <property type="project" value="PomBase"/>
</dbReference>
<dbReference type="GO" id="GO:0007089">
    <property type="term" value="P:traversing start control point of mitotic cell cycle"/>
    <property type="evidence" value="ECO:0000318"/>
    <property type="project" value="GO_Central"/>
</dbReference>
<dbReference type="CDD" id="cd20568">
    <property type="entry name" value="CYCLIN_CLBs_yeast_rpt1"/>
    <property type="match status" value="1"/>
</dbReference>
<dbReference type="CDD" id="cd20512">
    <property type="entry name" value="CYCLIN_CLBs_yeast_rpt2"/>
    <property type="match status" value="1"/>
</dbReference>
<dbReference type="FunFam" id="1.10.472.10:FF:000001">
    <property type="entry name" value="G2/mitotic-specific cyclin"/>
    <property type="match status" value="1"/>
</dbReference>
<dbReference type="Gene3D" id="1.10.472.10">
    <property type="entry name" value="Cyclin-like"/>
    <property type="match status" value="2"/>
</dbReference>
<dbReference type="InterPro" id="IPR039361">
    <property type="entry name" value="Cyclin"/>
</dbReference>
<dbReference type="InterPro" id="IPR013763">
    <property type="entry name" value="Cyclin-like_dom"/>
</dbReference>
<dbReference type="InterPro" id="IPR036915">
    <property type="entry name" value="Cyclin-like_sf"/>
</dbReference>
<dbReference type="InterPro" id="IPR046965">
    <property type="entry name" value="Cyclin_A/B-like"/>
</dbReference>
<dbReference type="InterPro" id="IPR004367">
    <property type="entry name" value="Cyclin_C-dom"/>
</dbReference>
<dbReference type="InterPro" id="IPR006671">
    <property type="entry name" value="Cyclin_N"/>
</dbReference>
<dbReference type="InterPro" id="IPR048258">
    <property type="entry name" value="Cyclins_cyclin-box"/>
</dbReference>
<dbReference type="PANTHER" id="PTHR10177">
    <property type="entry name" value="CYCLINS"/>
    <property type="match status" value="1"/>
</dbReference>
<dbReference type="Pfam" id="PF02984">
    <property type="entry name" value="Cyclin_C"/>
    <property type="match status" value="1"/>
</dbReference>
<dbReference type="Pfam" id="PF00134">
    <property type="entry name" value="Cyclin_N"/>
    <property type="match status" value="1"/>
</dbReference>
<dbReference type="PIRSF" id="PIRSF001771">
    <property type="entry name" value="Cyclin_A_B_D_E"/>
    <property type="match status" value="1"/>
</dbReference>
<dbReference type="SMART" id="SM00385">
    <property type="entry name" value="CYCLIN"/>
    <property type="match status" value="2"/>
</dbReference>
<dbReference type="SMART" id="SM01332">
    <property type="entry name" value="Cyclin_C"/>
    <property type="match status" value="1"/>
</dbReference>
<dbReference type="SUPFAM" id="SSF47954">
    <property type="entry name" value="Cyclin-like"/>
    <property type="match status" value="2"/>
</dbReference>
<dbReference type="PROSITE" id="PS00292">
    <property type="entry name" value="CYCLINS"/>
    <property type="match status" value="1"/>
</dbReference>
<protein>
    <recommendedName>
        <fullName evidence="12">G2/mitotic-specific cyclin cdc13</fullName>
    </recommendedName>
</protein>
<proteinExistence type="evidence at protein level"/>
<reference key="1">
    <citation type="journal article" date="1988" name="EMBO J.">
        <title>Involvement of cdc13+ in mitotic control in Schizosaccharomyces pombe: possible interaction of the gene product with microtubules.</title>
        <authorList>
            <person name="Booher R."/>
            <person name="Beach D."/>
        </authorList>
    </citation>
    <scope>NUCLEOTIDE SEQUENCE [GENOMIC DNA]</scope>
    <scope>FUNCTION</scope>
    <scope>ASSOCIATION WITH MICROTUBULES</scope>
</reference>
<reference key="2">
    <citation type="journal article" date="1988" name="J. Cell Sci.">
        <title>Cloning and sequencing of the cyclin-related cdc13+ gene and a cytological study of its role in fission yeast mitosis.</title>
        <authorList>
            <person name="Hagan I."/>
            <person name="Hayles J."/>
            <person name="Nurse P."/>
        </authorList>
    </citation>
    <scope>NUCLEOTIDE SEQUENCE [GENOMIC DNA]</scope>
    <scope>FUNCTION</scope>
</reference>
<reference key="3">
    <citation type="journal article" date="2002" name="Nature">
        <title>The genome sequence of Schizosaccharomyces pombe.</title>
        <authorList>
            <person name="Wood V."/>
            <person name="Gwilliam R."/>
            <person name="Rajandream M.A."/>
            <person name="Lyne M.H."/>
            <person name="Lyne R."/>
            <person name="Stewart A."/>
            <person name="Sgouros J.G."/>
            <person name="Peat N."/>
            <person name="Hayles J."/>
            <person name="Baker S.G."/>
            <person name="Basham D."/>
            <person name="Bowman S."/>
            <person name="Brooks K."/>
            <person name="Brown D."/>
            <person name="Brown S."/>
            <person name="Chillingworth T."/>
            <person name="Churcher C.M."/>
            <person name="Collins M."/>
            <person name="Connor R."/>
            <person name="Cronin A."/>
            <person name="Davis P."/>
            <person name="Feltwell T."/>
            <person name="Fraser A."/>
            <person name="Gentles S."/>
            <person name="Goble A."/>
            <person name="Hamlin N."/>
            <person name="Harris D.E."/>
            <person name="Hidalgo J."/>
            <person name="Hodgson G."/>
            <person name="Holroyd S."/>
            <person name="Hornsby T."/>
            <person name="Howarth S."/>
            <person name="Huckle E.J."/>
            <person name="Hunt S."/>
            <person name="Jagels K."/>
            <person name="James K.D."/>
            <person name="Jones L."/>
            <person name="Jones M."/>
            <person name="Leather S."/>
            <person name="McDonald S."/>
            <person name="McLean J."/>
            <person name="Mooney P."/>
            <person name="Moule S."/>
            <person name="Mungall K.L."/>
            <person name="Murphy L.D."/>
            <person name="Niblett D."/>
            <person name="Odell C."/>
            <person name="Oliver K."/>
            <person name="O'Neil S."/>
            <person name="Pearson D."/>
            <person name="Quail M.A."/>
            <person name="Rabbinowitsch E."/>
            <person name="Rutherford K.M."/>
            <person name="Rutter S."/>
            <person name="Saunders D."/>
            <person name="Seeger K."/>
            <person name="Sharp S."/>
            <person name="Skelton J."/>
            <person name="Simmonds M.N."/>
            <person name="Squares R."/>
            <person name="Squares S."/>
            <person name="Stevens K."/>
            <person name="Taylor K."/>
            <person name="Taylor R.G."/>
            <person name="Tivey A."/>
            <person name="Walsh S.V."/>
            <person name="Warren T."/>
            <person name="Whitehead S."/>
            <person name="Woodward J.R."/>
            <person name="Volckaert G."/>
            <person name="Aert R."/>
            <person name="Robben J."/>
            <person name="Grymonprez B."/>
            <person name="Weltjens I."/>
            <person name="Vanstreels E."/>
            <person name="Rieger M."/>
            <person name="Schaefer M."/>
            <person name="Mueller-Auer S."/>
            <person name="Gabel C."/>
            <person name="Fuchs M."/>
            <person name="Duesterhoeft A."/>
            <person name="Fritzc C."/>
            <person name="Holzer E."/>
            <person name="Moestl D."/>
            <person name="Hilbert H."/>
            <person name="Borzym K."/>
            <person name="Langer I."/>
            <person name="Beck A."/>
            <person name="Lehrach H."/>
            <person name="Reinhardt R."/>
            <person name="Pohl T.M."/>
            <person name="Eger P."/>
            <person name="Zimmermann W."/>
            <person name="Wedler H."/>
            <person name="Wambutt R."/>
            <person name="Purnelle B."/>
            <person name="Goffeau A."/>
            <person name="Cadieu E."/>
            <person name="Dreano S."/>
            <person name="Gloux S."/>
            <person name="Lelaure V."/>
            <person name="Mottier S."/>
            <person name="Galibert F."/>
            <person name="Aves S.J."/>
            <person name="Xiang Z."/>
            <person name="Hunt C."/>
            <person name="Moore K."/>
            <person name="Hurst S.M."/>
            <person name="Lucas M."/>
            <person name="Rochet M."/>
            <person name="Gaillardin C."/>
            <person name="Tallada V.A."/>
            <person name="Garzon A."/>
            <person name="Thode G."/>
            <person name="Daga R.R."/>
            <person name="Cruzado L."/>
            <person name="Jimenez J."/>
            <person name="Sanchez M."/>
            <person name="del Rey F."/>
            <person name="Benito J."/>
            <person name="Dominguez A."/>
            <person name="Revuelta J.L."/>
            <person name="Moreno S."/>
            <person name="Armstrong J."/>
            <person name="Forsburg S.L."/>
            <person name="Cerutti L."/>
            <person name="Lowe T."/>
            <person name="McCombie W.R."/>
            <person name="Paulsen I."/>
            <person name="Potashkin J."/>
            <person name="Shpakovski G.V."/>
            <person name="Ussery D."/>
            <person name="Barrell B.G."/>
            <person name="Nurse P."/>
        </authorList>
    </citation>
    <scope>NUCLEOTIDE SEQUENCE [LARGE SCALE GENOMIC DNA]</scope>
    <source>
        <strain>972 / ATCC 24843</strain>
    </source>
</reference>
<reference key="4">
    <citation type="journal article" date="2000" name="Genes Cells">
        <title>Large-scale screening of intracellular protein localization in living fission yeast cells by the use of a GFP-fusion genomic DNA library.</title>
        <authorList>
            <person name="Ding D.-Q."/>
            <person name="Tomita Y."/>
            <person name="Yamamoto A."/>
            <person name="Chikashige Y."/>
            <person name="Haraguchi T."/>
            <person name="Hiraoka Y."/>
        </authorList>
    </citation>
    <scope>NUCLEOTIDE SEQUENCE [LARGE SCALE GENOMIC DNA] OF 22-226</scope>
    <scope>SUBCELLULAR LOCATION</scope>
    <source>
        <strain>ATCC 38364 / 968</strain>
    </source>
</reference>
<reference key="5">
    <citation type="journal article" date="1988" name="Cell">
        <title>Cyclin in fission yeast.</title>
        <authorList>
            <person name="Solomon M."/>
            <person name="Booher R."/>
            <person name="Kirschner M."/>
            <person name="Beach B."/>
        </authorList>
    </citation>
    <scope>SIMILARITY TO THE CYCLIN FAMILY</scope>
</reference>
<reference key="6">
    <citation type="journal article" date="1988" name="Cell">
        <title>Cyclin in fission yeast.</title>
        <authorList>
            <person name="Goebl M."/>
            <person name="Bryers B."/>
        </authorList>
    </citation>
    <scope>SIMILARITY TO THE CYCLIN FAMILY</scope>
</reference>
<reference key="7">
    <citation type="journal article" date="1989" name="J. Cell Sci. Suppl.">
        <title>Fission yeast cyclin: subcellular localisation and cell cycle regulation.</title>
        <authorList>
            <person name="Alfa C.E."/>
            <person name="Booher R."/>
            <person name="Beach D."/>
            <person name="Hyams J.S."/>
        </authorList>
    </citation>
    <scope>FUNCTION</scope>
    <scope>SUBCELLULAR LOCATION</scope>
</reference>
<reference key="8">
    <citation type="journal article" date="1993" name="Mol. Cell. Biol.">
        <title>Two fission yeast B-type cyclins, cig2 and Cdc13, have different functions in mitosis.</title>
        <authorList>
            <person name="Bueno A."/>
            <person name="Russell P."/>
        </authorList>
    </citation>
    <scope>FUNCTION</scope>
    <scope>INTERACTION WITH CDC2</scope>
    <source>
        <strain>972 / ATCC 24843</strain>
    </source>
</reference>
<reference key="9">
    <citation type="journal article" date="1995" name="Genetics">
        <title>The role of cdc2 and other genes in meiosis in Schizosaccharomyces pombe.</title>
        <authorList>
            <person name="Iino Y."/>
            <person name="Hiramine Y."/>
            <person name="Yamamoto M."/>
        </authorList>
    </citation>
    <scope>FUNCTION</scope>
</reference>
<reference key="10">
    <citation type="journal article" date="1996" name="Trends Genet.">
        <title>A quantitative model for the cdc2 control of S phase and mitosis in fission yeast.</title>
        <authorList>
            <person name="Stern B."/>
            <person name="Nurse P."/>
        </authorList>
    </citation>
    <scope>REVIEW ON ASSOCIATION WITH CDC2</scope>
</reference>
<reference key="11">
    <citation type="journal article" date="1997" name="EMBO J.">
        <title>p25rum1 promotes proteolysis of the mitotic B-cyclin p56cdc13 during G1 of the fission yeast cell cycle.</title>
        <authorList>
            <person name="Correa-Bordes J."/>
            <person name="Gulli M.P."/>
            <person name="Nurse P."/>
        </authorList>
    </citation>
    <scope>FUNCTION</scope>
    <scope>INTERACTION WITH RUM1</scope>
</reference>
<reference key="12">
    <citation type="journal article" date="1998" name="J. Cell Sci.">
        <title>The Cdk inhibitors p25rum1 and p40SIC1 are functional homologues that play similar roles in the regulation of the cell cycle in fission and budding yeast.</title>
        <authorList>
            <person name="Sanchez-Diaz A."/>
            <person name="Gonzalez I."/>
            <person name="Arellano M."/>
            <person name="Moreno S."/>
        </authorList>
    </citation>
    <scope>INTERACTION WITH RUM1</scope>
</reference>
<reference key="13">
    <citation type="journal article" date="1998" name="Mol. Biol. Cell">
        <title>Cyclin B proteolysis and the cyclin-dependent kinase inhibitor rum1p are required for pheromone-induced G1 arrest in fission yeast.</title>
        <authorList>
            <person name="Stern B."/>
            <person name="Nurse P."/>
        </authorList>
    </citation>
    <scope>INTERACTION WITH RUM1</scope>
</reference>
<reference key="14">
    <citation type="journal article" date="2004" name="Curr. Biol.">
        <title>Sid4p-Cdc11p assembles the septation initiation network and its regulators at the S. pombe SPB.</title>
        <authorList>
            <person name="Morrell J.L."/>
            <person name="Tomlin G.C."/>
            <person name="Rajagopalan S."/>
            <person name="Venkatram S."/>
            <person name="Feoktistova A.S."/>
            <person name="Tasto J.J."/>
            <person name="Mehta S."/>
            <person name="Jennings J.L."/>
            <person name="Link A."/>
            <person name="Balasubramanian M.K."/>
            <person name="Gould K.L."/>
        </authorList>
    </citation>
    <scope>INTERACTION WITH CDC11</scope>
</reference>
<reference key="15">
    <citation type="journal article" date="2006" name="Nat. Biotechnol.">
        <title>ORFeome cloning and global analysis of protein localization in the fission yeast Schizosaccharomyces pombe.</title>
        <authorList>
            <person name="Matsuyama A."/>
            <person name="Arai R."/>
            <person name="Yashiroda Y."/>
            <person name="Shirai A."/>
            <person name="Kamata A."/>
            <person name="Sekido S."/>
            <person name="Kobayashi Y."/>
            <person name="Hashimoto A."/>
            <person name="Hamamoto M."/>
            <person name="Hiraoka Y."/>
            <person name="Horinouchi S."/>
            <person name="Yoshida M."/>
        </authorList>
    </citation>
    <scope>SUBCELLULAR LOCATION [LARGE SCALE ANALYSIS]</scope>
</reference>